<sequence length="234" mass="24729">MAKLTKRMRVIREKVDATKQYDINEAIALLKELATAKFNESVDVAVNLGIDARKSDQNVRGATVLPHGTGRSVRVAVFTQGPNAEAAKAAGAELVGMEDLADQIKKGEMNFDVVIASPDAMRVVGQLGQVLGPRGLMPNPKVGTVTPNVAEAVKNAKAGQVRYRNDKNGIIHTTIGKVDFDADKLKENLEALLVALKKAKPSQAKGVYIKKVSISTTMGAGVAVDQAGLSASAN</sequence>
<organism>
    <name type="scientific">Salmonella heidelberg (strain SL476)</name>
    <dbReference type="NCBI Taxonomy" id="454169"/>
    <lineage>
        <taxon>Bacteria</taxon>
        <taxon>Pseudomonadati</taxon>
        <taxon>Pseudomonadota</taxon>
        <taxon>Gammaproteobacteria</taxon>
        <taxon>Enterobacterales</taxon>
        <taxon>Enterobacteriaceae</taxon>
        <taxon>Salmonella</taxon>
    </lineage>
</organism>
<dbReference type="EMBL" id="CP001120">
    <property type="protein sequence ID" value="ACF70066.1"/>
    <property type="molecule type" value="Genomic_DNA"/>
</dbReference>
<dbReference type="RefSeq" id="WP_001096676.1">
    <property type="nucleotide sequence ID" value="NC_011083.1"/>
</dbReference>
<dbReference type="SMR" id="B4TCS1"/>
<dbReference type="KEGG" id="seh:SeHA_C4479"/>
<dbReference type="HOGENOM" id="CLU_062853_0_0_6"/>
<dbReference type="Proteomes" id="UP000001866">
    <property type="component" value="Chromosome"/>
</dbReference>
<dbReference type="GO" id="GO:0022625">
    <property type="term" value="C:cytosolic large ribosomal subunit"/>
    <property type="evidence" value="ECO:0007669"/>
    <property type="project" value="TreeGrafter"/>
</dbReference>
<dbReference type="GO" id="GO:0019843">
    <property type="term" value="F:rRNA binding"/>
    <property type="evidence" value="ECO:0007669"/>
    <property type="project" value="UniProtKB-UniRule"/>
</dbReference>
<dbReference type="GO" id="GO:0003735">
    <property type="term" value="F:structural constituent of ribosome"/>
    <property type="evidence" value="ECO:0007669"/>
    <property type="project" value="InterPro"/>
</dbReference>
<dbReference type="GO" id="GO:0000049">
    <property type="term" value="F:tRNA binding"/>
    <property type="evidence" value="ECO:0007669"/>
    <property type="project" value="UniProtKB-KW"/>
</dbReference>
<dbReference type="GO" id="GO:0006417">
    <property type="term" value="P:regulation of translation"/>
    <property type="evidence" value="ECO:0007669"/>
    <property type="project" value="UniProtKB-KW"/>
</dbReference>
<dbReference type="GO" id="GO:0006412">
    <property type="term" value="P:translation"/>
    <property type="evidence" value="ECO:0007669"/>
    <property type="project" value="UniProtKB-UniRule"/>
</dbReference>
<dbReference type="CDD" id="cd00403">
    <property type="entry name" value="Ribosomal_L1"/>
    <property type="match status" value="1"/>
</dbReference>
<dbReference type="FunFam" id="3.40.50.790:FF:000001">
    <property type="entry name" value="50S ribosomal protein L1"/>
    <property type="match status" value="1"/>
</dbReference>
<dbReference type="Gene3D" id="3.30.190.20">
    <property type="match status" value="1"/>
</dbReference>
<dbReference type="Gene3D" id="3.40.50.790">
    <property type="match status" value="1"/>
</dbReference>
<dbReference type="HAMAP" id="MF_01318_B">
    <property type="entry name" value="Ribosomal_uL1_B"/>
    <property type="match status" value="1"/>
</dbReference>
<dbReference type="InterPro" id="IPR005878">
    <property type="entry name" value="Ribosom_uL1_bac-type"/>
</dbReference>
<dbReference type="InterPro" id="IPR002143">
    <property type="entry name" value="Ribosomal_uL1"/>
</dbReference>
<dbReference type="InterPro" id="IPR023674">
    <property type="entry name" value="Ribosomal_uL1-like"/>
</dbReference>
<dbReference type="InterPro" id="IPR028364">
    <property type="entry name" value="Ribosomal_uL1/biogenesis"/>
</dbReference>
<dbReference type="InterPro" id="IPR016095">
    <property type="entry name" value="Ribosomal_uL1_3-a/b-sand"/>
</dbReference>
<dbReference type="InterPro" id="IPR023673">
    <property type="entry name" value="Ribosomal_uL1_CS"/>
</dbReference>
<dbReference type="NCBIfam" id="TIGR01169">
    <property type="entry name" value="rplA_bact"/>
    <property type="match status" value="1"/>
</dbReference>
<dbReference type="PANTHER" id="PTHR36427">
    <property type="entry name" value="54S RIBOSOMAL PROTEIN L1, MITOCHONDRIAL"/>
    <property type="match status" value="1"/>
</dbReference>
<dbReference type="PANTHER" id="PTHR36427:SF3">
    <property type="entry name" value="LARGE RIBOSOMAL SUBUNIT PROTEIN UL1M"/>
    <property type="match status" value="1"/>
</dbReference>
<dbReference type="Pfam" id="PF00687">
    <property type="entry name" value="Ribosomal_L1"/>
    <property type="match status" value="1"/>
</dbReference>
<dbReference type="PIRSF" id="PIRSF002155">
    <property type="entry name" value="Ribosomal_L1"/>
    <property type="match status" value="1"/>
</dbReference>
<dbReference type="SUPFAM" id="SSF56808">
    <property type="entry name" value="Ribosomal protein L1"/>
    <property type="match status" value="1"/>
</dbReference>
<dbReference type="PROSITE" id="PS01199">
    <property type="entry name" value="RIBOSOMAL_L1"/>
    <property type="match status" value="1"/>
</dbReference>
<proteinExistence type="inferred from homology"/>
<reference key="1">
    <citation type="journal article" date="2011" name="J. Bacteriol.">
        <title>Comparative genomics of 28 Salmonella enterica isolates: evidence for CRISPR-mediated adaptive sublineage evolution.</title>
        <authorList>
            <person name="Fricke W.F."/>
            <person name="Mammel M.K."/>
            <person name="McDermott P.F."/>
            <person name="Tartera C."/>
            <person name="White D.G."/>
            <person name="Leclerc J.E."/>
            <person name="Ravel J."/>
            <person name="Cebula T.A."/>
        </authorList>
    </citation>
    <scope>NUCLEOTIDE SEQUENCE [LARGE SCALE GENOMIC DNA]</scope>
    <source>
        <strain>SL476</strain>
    </source>
</reference>
<name>RL1_SALHS</name>
<protein>
    <recommendedName>
        <fullName evidence="1">Large ribosomal subunit protein uL1</fullName>
    </recommendedName>
    <alternativeName>
        <fullName evidence="2">50S ribosomal protein L1</fullName>
    </alternativeName>
</protein>
<gene>
    <name evidence="1" type="primary">rplA</name>
    <name type="ordered locus">SeHA_C4479</name>
</gene>
<keyword id="KW-0678">Repressor</keyword>
<keyword id="KW-0687">Ribonucleoprotein</keyword>
<keyword id="KW-0689">Ribosomal protein</keyword>
<keyword id="KW-0694">RNA-binding</keyword>
<keyword id="KW-0699">rRNA-binding</keyword>
<keyword id="KW-0810">Translation regulation</keyword>
<keyword id="KW-0820">tRNA-binding</keyword>
<accession>B4TCS1</accession>
<evidence type="ECO:0000255" key="1">
    <source>
        <dbReference type="HAMAP-Rule" id="MF_01318"/>
    </source>
</evidence>
<evidence type="ECO:0000305" key="2"/>
<comment type="function">
    <text evidence="1">Binds directly to 23S rRNA. The L1 stalk is quite mobile in the ribosome, and is involved in E site tRNA release.</text>
</comment>
<comment type="function">
    <text evidence="1">Protein L1 is also a translational repressor protein, it controls the translation of the L11 operon by binding to its mRNA.</text>
</comment>
<comment type="subunit">
    <text evidence="1">Part of the 50S ribosomal subunit.</text>
</comment>
<comment type="similarity">
    <text evidence="1">Belongs to the universal ribosomal protein uL1 family.</text>
</comment>
<feature type="chain" id="PRO_1000141456" description="Large ribosomal subunit protein uL1">
    <location>
        <begin position="1"/>
        <end position="234"/>
    </location>
</feature>